<gene>
    <name evidence="1" type="primary">rps27e</name>
    <name type="ordered locus">APE_0436a</name>
    <name type="ORF">APES015</name>
</gene>
<accession>Q9YF01</accession>
<evidence type="ECO:0000255" key="1">
    <source>
        <dbReference type="HAMAP-Rule" id="MF_00371"/>
    </source>
</evidence>
<proteinExistence type="inferred from homology"/>
<keyword id="KW-0479">Metal-binding</keyword>
<keyword id="KW-1185">Reference proteome</keyword>
<keyword id="KW-0687">Ribonucleoprotein</keyword>
<keyword id="KW-0689">Ribosomal protein</keyword>
<keyword id="KW-0862">Zinc</keyword>
<keyword id="KW-0863">Zinc-finger</keyword>
<organism>
    <name type="scientific">Aeropyrum pernix (strain ATCC 700893 / DSM 11879 / JCM 9820 / NBRC 100138 / K1)</name>
    <dbReference type="NCBI Taxonomy" id="272557"/>
    <lineage>
        <taxon>Archaea</taxon>
        <taxon>Thermoproteota</taxon>
        <taxon>Thermoprotei</taxon>
        <taxon>Desulfurococcales</taxon>
        <taxon>Desulfurococcaceae</taxon>
        <taxon>Aeropyrum</taxon>
    </lineage>
</organism>
<sequence>MAFAPPLPIRRRKVLIPRPRSRFLLVTCPKCGNRQVVFSHSTFRARCLNCGEVLVEPTGGKARILGKIERIYG</sequence>
<reference key="1">
    <citation type="journal article" date="1999" name="DNA Res.">
        <title>Complete genome sequence of an aerobic hyper-thermophilic crenarchaeon, Aeropyrum pernix K1.</title>
        <authorList>
            <person name="Kawarabayasi Y."/>
            <person name="Hino Y."/>
            <person name="Horikawa H."/>
            <person name="Yamazaki S."/>
            <person name="Haikawa Y."/>
            <person name="Jin-no K."/>
            <person name="Takahashi M."/>
            <person name="Sekine M."/>
            <person name="Baba S."/>
            <person name="Ankai A."/>
            <person name="Kosugi H."/>
            <person name="Hosoyama A."/>
            <person name="Fukui S."/>
            <person name="Nagai Y."/>
            <person name="Nishijima K."/>
            <person name="Nakazawa H."/>
            <person name="Takamiya M."/>
            <person name="Masuda S."/>
            <person name="Funahashi T."/>
            <person name="Tanaka T."/>
            <person name="Kudoh Y."/>
            <person name="Yamazaki J."/>
            <person name="Kushida N."/>
            <person name="Oguchi A."/>
            <person name="Aoki K."/>
            <person name="Kubota K."/>
            <person name="Nakamura Y."/>
            <person name="Nomura N."/>
            <person name="Sako Y."/>
            <person name="Kikuchi H."/>
        </authorList>
    </citation>
    <scope>NUCLEOTIDE SEQUENCE [LARGE SCALE GENOMIC DNA]</scope>
    <source>
        <strain>ATCC 700893 / DSM 11879 / JCM 9820 / NBRC 100138 / K1</strain>
    </source>
</reference>
<name>RS27_AERPE</name>
<feature type="chain" id="PRO_0000149068" description="Small ribosomal subunit protein eS27">
    <location>
        <begin position="1"/>
        <end position="73"/>
    </location>
</feature>
<feature type="zinc finger region" description="C4-type" evidence="1">
    <location>
        <begin position="28"/>
        <end position="50"/>
    </location>
</feature>
<feature type="binding site" evidence="1">
    <location>
        <position position="28"/>
    </location>
    <ligand>
        <name>Zn(2+)</name>
        <dbReference type="ChEBI" id="CHEBI:29105"/>
    </ligand>
</feature>
<feature type="binding site" evidence="1">
    <location>
        <position position="31"/>
    </location>
    <ligand>
        <name>Zn(2+)</name>
        <dbReference type="ChEBI" id="CHEBI:29105"/>
    </ligand>
</feature>
<feature type="binding site" evidence="1">
    <location>
        <position position="47"/>
    </location>
    <ligand>
        <name>Zn(2+)</name>
        <dbReference type="ChEBI" id="CHEBI:29105"/>
    </ligand>
</feature>
<feature type="binding site" evidence="1">
    <location>
        <position position="50"/>
    </location>
    <ligand>
        <name>Zn(2+)</name>
        <dbReference type="ChEBI" id="CHEBI:29105"/>
    </ligand>
</feature>
<protein>
    <recommendedName>
        <fullName evidence="1">Small ribosomal subunit protein eS27</fullName>
    </recommendedName>
</protein>
<comment type="cofactor">
    <cofactor evidence="1">
        <name>Zn(2+)</name>
        <dbReference type="ChEBI" id="CHEBI:29105"/>
    </cofactor>
    <text evidence="1">Binds 1 zinc ion per subunit.</text>
</comment>
<comment type="subunit">
    <text evidence="1">Part of the 30S ribosomal subunit.</text>
</comment>
<comment type="similarity">
    <text evidence="1">Belongs to the eukaryotic ribosomal protein eS27 family.</text>
</comment>
<dbReference type="EMBL" id="BA000002">
    <property type="protein sequence ID" value="BAA79395.1"/>
    <property type="molecule type" value="Genomic_DNA"/>
</dbReference>
<dbReference type="PIR" id="G72737">
    <property type="entry name" value="G72737"/>
</dbReference>
<dbReference type="RefSeq" id="WP_010865741.1">
    <property type="nucleotide sequence ID" value="NC_000854.2"/>
</dbReference>
<dbReference type="SMR" id="Q9YF01"/>
<dbReference type="STRING" id="272557.APE_0436a"/>
<dbReference type="EnsemblBacteria" id="BAA79395">
    <property type="protein sequence ID" value="BAA79395"/>
    <property type="gene ID" value="APE_0436a"/>
</dbReference>
<dbReference type="GeneID" id="1444623"/>
<dbReference type="KEGG" id="ape:APE_0436a"/>
<dbReference type="eggNOG" id="arCOG04108">
    <property type="taxonomic scope" value="Archaea"/>
</dbReference>
<dbReference type="Proteomes" id="UP000002518">
    <property type="component" value="Chromosome"/>
</dbReference>
<dbReference type="GO" id="GO:1990904">
    <property type="term" value="C:ribonucleoprotein complex"/>
    <property type="evidence" value="ECO:0007669"/>
    <property type="project" value="UniProtKB-KW"/>
</dbReference>
<dbReference type="GO" id="GO:0005840">
    <property type="term" value="C:ribosome"/>
    <property type="evidence" value="ECO:0007669"/>
    <property type="project" value="UniProtKB-KW"/>
</dbReference>
<dbReference type="GO" id="GO:0003735">
    <property type="term" value="F:structural constituent of ribosome"/>
    <property type="evidence" value="ECO:0007669"/>
    <property type="project" value="InterPro"/>
</dbReference>
<dbReference type="GO" id="GO:0008270">
    <property type="term" value="F:zinc ion binding"/>
    <property type="evidence" value="ECO:0007669"/>
    <property type="project" value="UniProtKB-UniRule"/>
</dbReference>
<dbReference type="GO" id="GO:0006412">
    <property type="term" value="P:translation"/>
    <property type="evidence" value="ECO:0007669"/>
    <property type="project" value="UniProtKB-UniRule"/>
</dbReference>
<dbReference type="Gene3D" id="2.20.25.100">
    <property type="entry name" value="Zn-binding ribosomal proteins"/>
    <property type="match status" value="1"/>
</dbReference>
<dbReference type="HAMAP" id="MF_00371">
    <property type="entry name" value="Ribosomal_eS27"/>
    <property type="match status" value="1"/>
</dbReference>
<dbReference type="InterPro" id="IPR000592">
    <property type="entry name" value="Ribosomal_eS27"/>
</dbReference>
<dbReference type="InterPro" id="IPR023407">
    <property type="entry name" value="Ribosomal_eS27_Zn-bd_dom_sf"/>
</dbReference>
<dbReference type="InterPro" id="IPR011332">
    <property type="entry name" value="Ribosomal_zn-bd"/>
</dbReference>
<dbReference type="NCBIfam" id="NF001629">
    <property type="entry name" value="PRK00415.1"/>
    <property type="match status" value="1"/>
</dbReference>
<dbReference type="PANTHER" id="PTHR11594">
    <property type="entry name" value="40S RIBOSOMAL PROTEIN S27"/>
    <property type="match status" value="1"/>
</dbReference>
<dbReference type="Pfam" id="PF01667">
    <property type="entry name" value="Ribosomal_S27e"/>
    <property type="match status" value="1"/>
</dbReference>
<dbReference type="SUPFAM" id="SSF57829">
    <property type="entry name" value="Zn-binding ribosomal proteins"/>
    <property type="match status" value="1"/>
</dbReference>
<dbReference type="PROSITE" id="PS01168">
    <property type="entry name" value="RIBOSOMAL_S27E"/>
    <property type="match status" value="1"/>
</dbReference>